<proteinExistence type="inferred from homology"/>
<gene>
    <name evidence="1" type="primary">rpmG</name>
    <name type="ordered locus">SSPA3342</name>
</gene>
<feature type="chain" id="PRO_1000115159" description="Large ribosomal subunit protein bL33">
    <location>
        <begin position="1"/>
        <end position="55"/>
    </location>
</feature>
<sequence length="55" mass="6372">MAKGIREKIKLVSSAGTGHFYTTTKNKRTKPEKLELKKFDPVVRQHVIYKEAKIK</sequence>
<protein>
    <recommendedName>
        <fullName evidence="1">Large ribosomal subunit protein bL33</fullName>
    </recommendedName>
    <alternativeName>
        <fullName evidence="2">50S ribosomal protein L33</fullName>
    </alternativeName>
</protein>
<keyword id="KW-0687">Ribonucleoprotein</keyword>
<keyword id="KW-0689">Ribosomal protein</keyword>
<reference key="1">
    <citation type="journal article" date="2009" name="BMC Genomics">
        <title>Pseudogene accumulation in the evolutionary histories of Salmonella enterica serovars Paratyphi A and Typhi.</title>
        <authorList>
            <person name="Holt K.E."/>
            <person name="Thomson N.R."/>
            <person name="Wain J."/>
            <person name="Langridge G.C."/>
            <person name="Hasan R."/>
            <person name="Bhutta Z.A."/>
            <person name="Quail M.A."/>
            <person name="Norbertczak H."/>
            <person name="Walker D."/>
            <person name="Simmonds M."/>
            <person name="White B."/>
            <person name="Bason N."/>
            <person name="Mungall K."/>
            <person name="Dougan G."/>
            <person name="Parkhill J."/>
        </authorList>
    </citation>
    <scope>NUCLEOTIDE SEQUENCE [LARGE SCALE GENOMIC DNA]</scope>
    <source>
        <strain>AKU_12601</strain>
    </source>
</reference>
<comment type="similarity">
    <text evidence="1">Belongs to the bacterial ribosomal protein bL33 family.</text>
</comment>
<evidence type="ECO:0000255" key="1">
    <source>
        <dbReference type="HAMAP-Rule" id="MF_00294"/>
    </source>
</evidence>
<evidence type="ECO:0000305" key="2"/>
<accession>B5BI10</accession>
<dbReference type="EMBL" id="FM200053">
    <property type="protein sequence ID" value="CAR61608.1"/>
    <property type="molecule type" value="Genomic_DNA"/>
</dbReference>
<dbReference type="RefSeq" id="WP_001051798.1">
    <property type="nucleotide sequence ID" value="NC_011147.1"/>
</dbReference>
<dbReference type="SMR" id="B5BI10"/>
<dbReference type="GeneID" id="97607673"/>
<dbReference type="KEGG" id="sek:SSPA3342"/>
<dbReference type="HOGENOM" id="CLU_190949_1_1_6"/>
<dbReference type="Proteomes" id="UP000001869">
    <property type="component" value="Chromosome"/>
</dbReference>
<dbReference type="GO" id="GO:0022625">
    <property type="term" value="C:cytosolic large ribosomal subunit"/>
    <property type="evidence" value="ECO:0007669"/>
    <property type="project" value="TreeGrafter"/>
</dbReference>
<dbReference type="GO" id="GO:0003735">
    <property type="term" value="F:structural constituent of ribosome"/>
    <property type="evidence" value="ECO:0007669"/>
    <property type="project" value="InterPro"/>
</dbReference>
<dbReference type="GO" id="GO:0006412">
    <property type="term" value="P:translation"/>
    <property type="evidence" value="ECO:0007669"/>
    <property type="project" value="UniProtKB-UniRule"/>
</dbReference>
<dbReference type="FunFam" id="2.20.28.120:FF:000001">
    <property type="entry name" value="50S ribosomal protein L33"/>
    <property type="match status" value="1"/>
</dbReference>
<dbReference type="Gene3D" id="2.20.28.120">
    <property type="entry name" value="Ribosomal protein L33"/>
    <property type="match status" value="1"/>
</dbReference>
<dbReference type="HAMAP" id="MF_00294">
    <property type="entry name" value="Ribosomal_bL33"/>
    <property type="match status" value="1"/>
</dbReference>
<dbReference type="InterPro" id="IPR001705">
    <property type="entry name" value="Ribosomal_bL33"/>
</dbReference>
<dbReference type="InterPro" id="IPR018264">
    <property type="entry name" value="Ribosomal_bL33_CS"/>
</dbReference>
<dbReference type="InterPro" id="IPR038584">
    <property type="entry name" value="Ribosomal_bL33_sf"/>
</dbReference>
<dbReference type="InterPro" id="IPR011332">
    <property type="entry name" value="Ribosomal_zn-bd"/>
</dbReference>
<dbReference type="NCBIfam" id="NF001860">
    <property type="entry name" value="PRK00595.1"/>
    <property type="match status" value="1"/>
</dbReference>
<dbReference type="NCBIfam" id="TIGR01023">
    <property type="entry name" value="rpmG_bact"/>
    <property type="match status" value="1"/>
</dbReference>
<dbReference type="PANTHER" id="PTHR15238">
    <property type="entry name" value="54S RIBOSOMAL PROTEIN L39, MITOCHONDRIAL"/>
    <property type="match status" value="1"/>
</dbReference>
<dbReference type="PANTHER" id="PTHR15238:SF1">
    <property type="entry name" value="LARGE RIBOSOMAL SUBUNIT PROTEIN BL33M"/>
    <property type="match status" value="1"/>
</dbReference>
<dbReference type="Pfam" id="PF00471">
    <property type="entry name" value="Ribosomal_L33"/>
    <property type="match status" value="1"/>
</dbReference>
<dbReference type="SUPFAM" id="SSF57829">
    <property type="entry name" value="Zn-binding ribosomal proteins"/>
    <property type="match status" value="1"/>
</dbReference>
<dbReference type="PROSITE" id="PS00582">
    <property type="entry name" value="RIBOSOMAL_L33"/>
    <property type="match status" value="1"/>
</dbReference>
<organism>
    <name type="scientific">Salmonella paratyphi A (strain AKU_12601)</name>
    <dbReference type="NCBI Taxonomy" id="554290"/>
    <lineage>
        <taxon>Bacteria</taxon>
        <taxon>Pseudomonadati</taxon>
        <taxon>Pseudomonadota</taxon>
        <taxon>Gammaproteobacteria</taxon>
        <taxon>Enterobacterales</taxon>
        <taxon>Enterobacteriaceae</taxon>
        <taxon>Salmonella</taxon>
    </lineage>
</organism>
<name>RL33_SALPK</name>